<keyword id="KW-0903">Direct protein sequencing</keyword>
<keyword id="KW-0597">Phosphoprotein</keyword>
<keyword id="KW-1185">Reference proteome</keyword>
<keyword id="KW-0687">Ribonucleoprotein</keyword>
<keyword id="KW-0689">Ribosomal protein</keyword>
<feature type="initiator methionine" description="Removed" evidence="3">
    <location>
        <position position="1"/>
    </location>
</feature>
<feature type="chain" id="PRO_0000154766" description="Large ribosomal subunit protein uL10">
    <location>
        <begin position="2"/>
        <end position="312"/>
    </location>
</feature>
<feature type="region of interest" description="Disordered" evidence="2">
    <location>
        <begin position="287"/>
        <end position="312"/>
    </location>
</feature>
<organism>
    <name type="scientific">Caenorhabditis elegans</name>
    <dbReference type="NCBI Taxonomy" id="6239"/>
    <lineage>
        <taxon>Eukaryota</taxon>
        <taxon>Metazoa</taxon>
        <taxon>Ecdysozoa</taxon>
        <taxon>Nematoda</taxon>
        <taxon>Chromadorea</taxon>
        <taxon>Rhabditida</taxon>
        <taxon>Rhabditina</taxon>
        <taxon>Rhabditomorpha</taxon>
        <taxon>Rhabditoidea</taxon>
        <taxon>Rhabditidae</taxon>
        <taxon>Peloderinae</taxon>
        <taxon>Caenorhabditis</taxon>
    </lineage>
</organism>
<protein>
    <recommendedName>
        <fullName evidence="4">Large ribosomal subunit protein uL10</fullName>
    </recommendedName>
    <alternativeName>
        <fullName>60S acidic ribosomal protein P0</fullName>
    </alternativeName>
</protein>
<reference key="1">
    <citation type="journal article" date="1998" name="Science">
        <title>Genome sequence of the nematode C. elegans: a platform for investigating biology.</title>
        <authorList>
            <consortium name="The C. elegans sequencing consortium"/>
        </authorList>
    </citation>
    <scope>NUCLEOTIDE SEQUENCE [LARGE SCALE GENOMIC DNA]</scope>
    <source>
        <strain>Bristol N2</strain>
    </source>
</reference>
<reference key="2">
    <citation type="journal article" date="1997" name="Electrophoresis">
        <title>Two-dimensional gel electrophoresis of Caenorhabditis elegans homogenates and identification of protein spots by microsequencing.</title>
        <authorList>
            <person name="Bini L."/>
            <person name="Heid H."/>
            <person name="Liberatori S."/>
            <person name="Geier G."/>
            <person name="Pallini V."/>
            <person name="Zwilling R."/>
        </authorList>
    </citation>
    <scope>PROTEIN SEQUENCE OF 2-16</scope>
    <source>
        <strain>Bristol N2</strain>
    </source>
</reference>
<name>RLA0_CAEEL</name>
<sequence>MVREDRSTWKANYFTKLVELFEEYPKCLLVGVDNVGSKQMQEIRQAMRGHAEILMGKNTMIRKALRGHLGKNPSLEKLLPHIVENVGFVFTKEDLGEIRSKLLENRKGAPAKAGAIAPCDVKLPPQNTGMGPEKTSFFQALQIPTKIARGTIEILNDVHLIKEGDKVGASESALLNMLGVTPFSYGLVVRQVYDDGTLYTPEVLDMTTEELRKRFLSGVRNVASVSLAVNYPTLASVAHSLANGLQNMLGVAAVTDVSFKEAETIKAFIADPSKFAAAAPAAAAAPAAAAPAAKKEEPKEESDDDMGFGLFD</sequence>
<accession>Q93572</accession>
<dbReference type="EMBL" id="Z79754">
    <property type="protein sequence ID" value="CAB02098.1"/>
    <property type="molecule type" value="Genomic_DNA"/>
</dbReference>
<dbReference type="PIR" id="T21351">
    <property type="entry name" value="T21351"/>
</dbReference>
<dbReference type="SMR" id="Q93572"/>
<dbReference type="BioGRID" id="38357">
    <property type="interactions" value="114"/>
</dbReference>
<dbReference type="DIP" id="DIP-26018N"/>
<dbReference type="FunCoup" id="Q93572">
    <property type="interactions" value="2031"/>
</dbReference>
<dbReference type="IntAct" id="Q93572">
    <property type="interactions" value="4"/>
</dbReference>
<dbReference type="STRING" id="6239.F25H2.10.1"/>
<dbReference type="PaxDb" id="6239-F25H2.10"/>
<dbReference type="PeptideAtlas" id="Q93572"/>
<dbReference type="EnsemblMetazoa" id="F25H2.10.1">
    <property type="protein sequence ID" value="F25H2.10.1"/>
    <property type="gene ID" value="WBGene00004408"/>
</dbReference>
<dbReference type="KEGG" id="cel:CELE_F25H2.10"/>
<dbReference type="UCSC" id="F25H2.10.1">
    <property type="organism name" value="c. elegans"/>
</dbReference>
<dbReference type="AGR" id="WB:WBGene00004408"/>
<dbReference type="CTD" id="172943"/>
<dbReference type="WormBase" id="F25H2.10">
    <property type="protein sequence ID" value="CE09655"/>
    <property type="gene ID" value="WBGene00004408"/>
    <property type="gene designation" value="rplp-0"/>
</dbReference>
<dbReference type="eggNOG" id="KOG0815">
    <property type="taxonomic scope" value="Eukaryota"/>
</dbReference>
<dbReference type="GeneTree" id="ENSGT00390000017839"/>
<dbReference type="HOGENOM" id="CLU_053173_1_1_1"/>
<dbReference type="InParanoid" id="Q93572"/>
<dbReference type="OMA" id="DMNPFKL"/>
<dbReference type="OrthoDB" id="10259902at2759"/>
<dbReference type="PhylomeDB" id="Q93572"/>
<dbReference type="Reactome" id="R-CEL-156827">
    <property type="pathway name" value="L13a-mediated translational silencing of Ceruloplasmin expression"/>
</dbReference>
<dbReference type="Reactome" id="R-CEL-1799339">
    <property type="pathway name" value="SRP-dependent cotranslational protein targeting to membrane"/>
</dbReference>
<dbReference type="Reactome" id="R-CEL-72689">
    <property type="pathway name" value="Formation of a pool of free 40S subunits"/>
</dbReference>
<dbReference type="Reactome" id="R-CEL-72706">
    <property type="pathway name" value="GTP hydrolysis and joining of the 60S ribosomal subunit"/>
</dbReference>
<dbReference type="Reactome" id="R-CEL-975956">
    <property type="pathway name" value="Nonsense Mediated Decay (NMD) independent of the Exon Junction Complex (EJC)"/>
</dbReference>
<dbReference type="Reactome" id="R-CEL-975957">
    <property type="pathway name" value="Nonsense Mediated Decay (NMD) enhanced by the Exon Junction Complex (EJC)"/>
</dbReference>
<dbReference type="SignaLink" id="Q93572"/>
<dbReference type="PRO" id="PR:Q93572"/>
<dbReference type="Proteomes" id="UP000001940">
    <property type="component" value="Chromosome I"/>
</dbReference>
<dbReference type="Bgee" id="WBGene00004408">
    <property type="expression patterns" value="Expressed in pharyngeal muscle cell (C elegans) and 4 other cell types or tissues"/>
</dbReference>
<dbReference type="GO" id="GO:0022625">
    <property type="term" value="C:cytosolic large ribosomal subunit"/>
    <property type="evidence" value="ECO:0000318"/>
    <property type="project" value="GO_Central"/>
</dbReference>
<dbReference type="GO" id="GO:0070180">
    <property type="term" value="F:large ribosomal subunit rRNA binding"/>
    <property type="evidence" value="ECO:0000318"/>
    <property type="project" value="GO_Central"/>
</dbReference>
<dbReference type="GO" id="GO:0003735">
    <property type="term" value="F:structural constituent of ribosome"/>
    <property type="evidence" value="ECO:0000318"/>
    <property type="project" value="GO_Central"/>
</dbReference>
<dbReference type="GO" id="GO:0002181">
    <property type="term" value="P:cytoplasmic translation"/>
    <property type="evidence" value="ECO:0000318"/>
    <property type="project" value="GO_Central"/>
</dbReference>
<dbReference type="GO" id="GO:0042254">
    <property type="term" value="P:ribosome biogenesis"/>
    <property type="evidence" value="ECO:0007669"/>
    <property type="project" value="InterPro"/>
</dbReference>
<dbReference type="CDD" id="cd05795">
    <property type="entry name" value="Ribosomal_P0_L10e"/>
    <property type="match status" value="1"/>
</dbReference>
<dbReference type="FunFam" id="3.30.70.1730:FF:000002">
    <property type="entry name" value="60S acidic ribosomal protein P0"/>
    <property type="match status" value="1"/>
</dbReference>
<dbReference type="FunFam" id="3.90.105.20:FF:000001">
    <property type="entry name" value="60S acidic ribosomal protein P0"/>
    <property type="match status" value="1"/>
</dbReference>
<dbReference type="Gene3D" id="3.30.70.1730">
    <property type="match status" value="1"/>
</dbReference>
<dbReference type="Gene3D" id="3.90.105.20">
    <property type="match status" value="1"/>
</dbReference>
<dbReference type="InterPro" id="IPR050323">
    <property type="entry name" value="Ribosomal_protein_uL10"/>
</dbReference>
<dbReference type="InterPro" id="IPR001790">
    <property type="entry name" value="Ribosomal_uL10"/>
</dbReference>
<dbReference type="InterPro" id="IPR040637">
    <property type="entry name" value="Ribosomal_uL10-like_insert"/>
</dbReference>
<dbReference type="InterPro" id="IPR043164">
    <property type="entry name" value="Ribosomal_uL10-like_insert_sf"/>
</dbReference>
<dbReference type="InterPro" id="IPR043141">
    <property type="entry name" value="Ribosomal_uL10-like_sf"/>
</dbReference>
<dbReference type="InterPro" id="IPR030670">
    <property type="entry name" value="uL10_eukaryotes"/>
</dbReference>
<dbReference type="PANTHER" id="PTHR45699">
    <property type="entry name" value="60S ACIDIC RIBOSOMAL PROTEIN P0"/>
    <property type="match status" value="1"/>
</dbReference>
<dbReference type="PANTHER" id="PTHR45699:SF3">
    <property type="entry name" value="LARGE RIBOSOMAL SUBUNIT PROTEIN UL10"/>
    <property type="match status" value="1"/>
</dbReference>
<dbReference type="Pfam" id="PF00428">
    <property type="entry name" value="Ribosomal_60s"/>
    <property type="match status" value="1"/>
</dbReference>
<dbReference type="Pfam" id="PF00466">
    <property type="entry name" value="Ribosomal_L10"/>
    <property type="match status" value="1"/>
</dbReference>
<dbReference type="Pfam" id="PF17777">
    <property type="entry name" value="RL10P_insert"/>
    <property type="match status" value="1"/>
</dbReference>
<dbReference type="PIRSF" id="PIRSF039087">
    <property type="entry name" value="L10E"/>
    <property type="match status" value="1"/>
</dbReference>
<dbReference type="SUPFAM" id="SSF160369">
    <property type="entry name" value="Ribosomal protein L10-like"/>
    <property type="match status" value="1"/>
</dbReference>
<evidence type="ECO:0000250" key="1"/>
<evidence type="ECO:0000256" key="2">
    <source>
        <dbReference type="SAM" id="MobiDB-lite"/>
    </source>
</evidence>
<evidence type="ECO:0000269" key="3">
    <source>
    </source>
</evidence>
<evidence type="ECO:0000305" key="4"/>
<evidence type="ECO:0000312" key="5">
    <source>
        <dbReference type="WormBase" id="F25H2.10"/>
    </source>
</evidence>
<gene>
    <name evidence="5" type="primary">rplp-0</name>
    <name evidence="5" type="synonym">rla-0</name>
    <name evidence="5" type="synonym">rpa-0</name>
    <name evidence="5" type="ORF">F25H2.10</name>
</gene>
<proteinExistence type="evidence at protein level"/>
<comment type="function">
    <text>Ribosomal protein P0 is the functional equivalent of E.coli protein L10.</text>
</comment>
<comment type="subunit">
    <text>P0 forms a pentameric complex by interaction with dimers of P1 and P2.</text>
</comment>
<comment type="PTM">
    <text evidence="1">Phosphorylated.</text>
</comment>
<comment type="similarity">
    <text evidence="4">Belongs to the universal ribosomal protein uL10 family.</text>
</comment>